<evidence type="ECO:0000250" key="1">
    <source>
        <dbReference type="UniProtKB" id="P49591"/>
    </source>
</evidence>
<evidence type="ECO:0000256" key="2">
    <source>
        <dbReference type="SAM" id="MobiDB-lite"/>
    </source>
</evidence>
<evidence type="ECO:0000305" key="3"/>
<proteinExistence type="evidence at transcript level"/>
<reference key="1">
    <citation type="submission" date="2000-08" db="EMBL/GenBank/DDBJ databases">
        <title>Crystallization and structural analysis of seryl-tRNA synthetase.</title>
        <authorList>
            <person name="Xu X.-M."/>
            <person name="Carlson B.A."/>
            <person name="Hatfield D.L."/>
        </authorList>
    </citation>
    <scope>NUCLEOTIDE SEQUENCE [MRNA]</scope>
</reference>
<dbReference type="EC" id="6.1.1.11" evidence="1"/>
<dbReference type="EMBL" id="AF297553">
    <property type="protein sequence ID" value="AAG03084.1"/>
    <property type="molecule type" value="mRNA"/>
</dbReference>
<dbReference type="RefSeq" id="NP_776600.1">
    <property type="nucleotide sequence ID" value="NM_174175.3"/>
</dbReference>
<dbReference type="SMR" id="Q9GMB8"/>
<dbReference type="FunCoup" id="Q9GMB8">
    <property type="interactions" value="3255"/>
</dbReference>
<dbReference type="STRING" id="9913.ENSBTAP00000017232"/>
<dbReference type="PaxDb" id="9913-ENSBTAP00000017232"/>
<dbReference type="PeptideAtlas" id="Q9GMB8"/>
<dbReference type="Ensembl" id="ENSBTAT00000017232.5">
    <property type="protein sequence ID" value="ENSBTAP00000017232.3"/>
    <property type="gene ID" value="ENSBTAG00000012962.7"/>
</dbReference>
<dbReference type="GeneID" id="281476"/>
<dbReference type="KEGG" id="bta:281476"/>
<dbReference type="CTD" id="6301"/>
<dbReference type="VEuPathDB" id="HostDB:ENSBTAG00000012962"/>
<dbReference type="VGNC" id="VGNC:34291">
    <property type="gene designation" value="SARS1"/>
</dbReference>
<dbReference type="eggNOG" id="KOG2509">
    <property type="taxonomic scope" value="Eukaryota"/>
</dbReference>
<dbReference type="GeneTree" id="ENSGT00940000153792"/>
<dbReference type="HOGENOM" id="CLU_023797_0_0_1"/>
<dbReference type="InParanoid" id="Q9GMB8"/>
<dbReference type="OMA" id="GYTPCFR"/>
<dbReference type="OrthoDB" id="10264585at2759"/>
<dbReference type="TreeFam" id="TF300762"/>
<dbReference type="UniPathway" id="UPA00906">
    <property type="reaction ID" value="UER00895"/>
</dbReference>
<dbReference type="Proteomes" id="UP000009136">
    <property type="component" value="Chromosome 3"/>
</dbReference>
<dbReference type="Bgee" id="ENSBTAG00000012962">
    <property type="expression patterns" value="Expressed in neutrophil and 108 other cell types or tissues"/>
</dbReference>
<dbReference type="GO" id="GO:0005737">
    <property type="term" value="C:cytoplasm"/>
    <property type="evidence" value="ECO:0000250"/>
    <property type="project" value="UniProtKB"/>
</dbReference>
<dbReference type="GO" id="GO:0005829">
    <property type="term" value="C:cytosol"/>
    <property type="evidence" value="ECO:0000250"/>
    <property type="project" value="UniProtKB"/>
</dbReference>
<dbReference type="GO" id="GO:0005634">
    <property type="term" value="C:nucleus"/>
    <property type="evidence" value="ECO:0000250"/>
    <property type="project" value="UniProtKB"/>
</dbReference>
<dbReference type="GO" id="GO:0005524">
    <property type="term" value="F:ATP binding"/>
    <property type="evidence" value="ECO:0007669"/>
    <property type="project" value="UniProtKB-KW"/>
</dbReference>
<dbReference type="GO" id="GO:0019899">
    <property type="term" value="F:enzyme binding"/>
    <property type="evidence" value="ECO:0007669"/>
    <property type="project" value="Ensembl"/>
</dbReference>
<dbReference type="GO" id="GO:0060090">
    <property type="term" value="F:molecular adaptor activity"/>
    <property type="evidence" value="ECO:0007669"/>
    <property type="project" value="Ensembl"/>
</dbReference>
<dbReference type="GO" id="GO:0042803">
    <property type="term" value="F:protein homodimerization activity"/>
    <property type="evidence" value="ECO:0007669"/>
    <property type="project" value="Ensembl"/>
</dbReference>
<dbReference type="GO" id="GO:0000978">
    <property type="term" value="F:RNA polymerase II cis-regulatory region sequence-specific DNA binding"/>
    <property type="evidence" value="ECO:0000250"/>
    <property type="project" value="UniProtKB"/>
</dbReference>
<dbReference type="GO" id="GO:0098619">
    <property type="term" value="F:selenocysteine-tRNA ligase activity"/>
    <property type="evidence" value="ECO:0000250"/>
    <property type="project" value="UniProtKB"/>
</dbReference>
<dbReference type="GO" id="GO:0004828">
    <property type="term" value="F:serine-tRNA ligase activity"/>
    <property type="evidence" value="ECO:0000250"/>
    <property type="project" value="UniProtKB"/>
</dbReference>
<dbReference type="GO" id="GO:0000049">
    <property type="term" value="F:tRNA binding"/>
    <property type="evidence" value="ECO:0000318"/>
    <property type="project" value="GO_Central"/>
</dbReference>
<dbReference type="GO" id="GO:0002181">
    <property type="term" value="P:cytoplasmic translation"/>
    <property type="evidence" value="ECO:0000250"/>
    <property type="project" value="UniProtKB"/>
</dbReference>
<dbReference type="GO" id="GO:0016525">
    <property type="term" value="P:negative regulation of angiogenesis"/>
    <property type="evidence" value="ECO:0000250"/>
    <property type="project" value="UniProtKB"/>
</dbReference>
<dbReference type="GO" id="GO:0000122">
    <property type="term" value="P:negative regulation of transcription by RNA polymerase II"/>
    <property type="evidence" value="ECO:0000250"/>
    <property type="project" value="UniProtKB"/>
</dbReference>
<dbReference type="GO" id="GO:1904046">
    <property type="term" value="P:negative regulation of vascular endothelial growth factor production"/>
    <property type="evidence" value="ECO:0000250"/>
    <property type="project" value="UniProtKB"/>
</dbReference>
<dbReference type="GO" id="GO:0001514">
    <property type="term" value="P:selenocysteine incorporation"/>
    <property type="evidence" value="ECO:0000250"/>
    <property type="project" value="UniProtKB"/>
</dbReference>
<dbReference type="GO" id="GO:0006434">
    <property type="term" value="P:seryl-tRNA aminoacylation"/>
    <property type="evidence" value="ECO:0000250"/>
    <property type="project" value="UniProtKB"/>
</dbReference>
<dbReference type="GO" id="GO:0006400">
    <property type="term" value="P:tRNA modification"/>
    <property type="evidence" value="ECO:0007669"/>
    <property type="project" value="Ensembl"/>
</dbReference>
<dbReference type="CDD" id="cd00770">
    <property type="entry name" value="SerRS_core"/>
    <property type="match status" value="1"/>
</dbReference>
<dbReference type="FunFam" id="1.10.287.40:FF:000002">
    <property type="entry name" value="Serine--tRNA ligase, cytoplasmic"/>
    <property type="match status" value="1"/>
</dbReference>
<dbReference type="FunFam" id="3.30.930.10:FF:000027">
    <property type="entry name" value="Serine--tRNA ligase, cytoplasmic"/>
    <property type="match status" value="1"/>
</dbReference>
<dbReference type="Gene3D" id="3.30.930.10">
    <property type="entry name" value="Bira Bifunctional Protein, Domain 2"/>
    <property type="match status" value="1"/>
</dbReference>
<dbReference type="Gene3D" id="1.10.287.40">
    <property type="entry name" value="Serine-tRNA synthetase, tRNA binding domain"/>
    <property type="match status" value="1"/>
</dbReference>
<dbReference type="InterPro" id="IPR002314">
    <property type="entry name" value="aa-tRNA-synt_IIb"/>
</dbReference>
<dbReference type="InterPro" id="IPR006195">
    <property type="entry name" value="aa-tRNA-synth_II"/>
</dbReference>
<dbReference type="InterPro" id="IPR045864">
    <property type="entry name" value="aa-tRNA-synth_II/BPL/LPL"/>
</dbReference>
<dbReference type="InterPro" id="IPR002317">
    <property type="entry name" value="Ser-tRNA-ligase_type_1"/>
</dbReference>
<dbReference type="InterPro" id="IPR015866">
    <property type="entry name" value="Ser-tRNA-synth_1_N"/>
</dbReference>
<dbReference type="InterPro" id="IPR042103">
    <property type="entry name" value="SerRS_1_N_sf"/>
</dbReference>
<dbReference type="InterPro" id="IPR033729">
    <property type="entry name" value="SerRS_core"/>
</dbReference>
<dbReference type="InterPro" id="IPR010978">
    <property type="entry name" value="tRNA-bd_arm"/>
</dbReference>
<dbReference type="NCBIfam" id="TIGR00414">
    <property type="entry name" value="serS"/>
    <property type="match status" value="1"/>
</dbReference>
<dbReference type="PANTHER" id="PTHR11778">
    <property type="entry name" value="SERYL-TRNA SYNTHETASE"/>
    <property type="match status" value="1"/>
</dbReference>
<dbReference type="Pfam" id="PF02403">
    <property type="entry name" value="Seryl_tRNA_N"/>
    <property type="match status" value="1"/>
</dbReference>
<dbReference type="Pfam" id="PF00587">
    <property type="entry name" value="tRNA-synt_2b"/>
    <property type="match status" value="1"/>
</dbReference>
<dbReference type="PIRSF" id="PIRSF001529">
    <property type="entry name" value="Ser-tRNA-synth_IIa"/>
    <property type="match status" value="1"/>
</dbReference>
<dbReference type="PRINTS" id="PR00981">
    <property type="entry name" value="TRNASYNTHSER"/>
</dbReference>
<dbReference type="SUPFAM" id="SSF55681">
    <property type="entry name" value="Class II aaRS and biotin synthetases"/>
    <property type="match status" value="1"/>
</dbReference>
<dbReference type="SUPFAM" id="SSF46589">
    <property type="entry name" value="tRNA-binding arm"/>
    <property type="match status" value="1"/>
</dbReference>
<dbReference type="PROSITE" id="PS50862">
    <property type="entry name" value="AA_TRNA_LIGASE_II"/>
    <property type="match status" value="1"/>
</dbReference>
<feature type="chain" id="PRO_0000122189" description="Serine--tRNA ligase, cytoplasmic">
    <location>
        <begin position="1"/>
        <end position="514"/>
    </location>
</feature>
<feature type="region of interest" description="Interaction with tRNA" evidence="1">
    <location>
        <begin position="9"/>
        <end position="61"/>
    </location>
</feature>
<feature type="region of interest" description="Disordered" evidence="2">
    <location>
        <begin position="475"/>
        <end position="514"/>
    </location>
</feature>
<feature type="short sequence motif" description="Nuclear localization signal" evidence="1">
    <location>
        <begin position="482"/>
        <end position="494"/>
    </location>
</feature>
<feature type="compositionally biased region" description="Basic and acidic residues" evidence="2">
    <location>
        <begin position="479"/>
        <end position="501"/>
    </location>
</feature>
<feature type="compositionally biased region" description="Polar residues" evidence="2">
    <location>
        <begin position="504"/>
        <end position="514"/>
    </location>
</feature>
<feature type="binding site" evidence="1">
    <location>
        <position position="271"/>
    </location>
    <ligand>
        <name>L-serine</name>
        <dbReference type="ChEBI" id="CHEBI:33384"/>
    </ligand>
</feature>
<feature type="binding site" evidence="1">
    <location>
        <begin position="302"/>
        <end position="304"/>
    </location>
    <ligand>
        <name>ATP</name>
        <dbReference type="ChEBI" id="CHEBI:30616"/>
    </ligand>
</feature>
<feature type="binding site" evidence="1">
    <location>
        <position position="302"/>
    </location>
    <ligand>
        <name>L-serine</name>
        <dbReference type="ChEBI" id="CHEBI:33384"/>
    </ligand>
</feature>
<feature type="binding site" evidence="1">
    <location>
        <begin position="318"/>
        <end position="321"/>
    </location>
    <ligand>
        <name>ATP</name>
        <dbReference type="ChEBI" id="CHEBI:30616"/>
    </ligand>
</feature>
<feature type="binding site" evidence="1">
    <location>
        <position position="325"/>
    </location>
    <ligand>
        <name>L-serine</name>
        <dbReference type="ChEBI" id="CHEBI:33384"/>
    </ligand>
</feature>
<feature type="binding site" evidence="1">
    <location>
        <begin position="391"/>
        <end position="394"/>
    </location>
    <ligand>
        <name>ATP</name>
        <dbReference type="ChEBI" id="CHEBI:30616"/>
    </ligand>
</feature>
<feature type="binding site" evidence="1">
    <location>
        <position position="427"/>
    </location>
    <ligand>
        <name>L-serine</name>
        <dbReference type="ChEBI" id="CHEBI:33384"/>
    </ligand>
</feature>
<feature type="site" description="Important for serine binding" evidence="1">
    <location>
        <position position="429"/>
    </location>
</feature>
<feature type="modified residue" description="N-acetylmethionine" evidence="1">
    <location>
        <position position="1"/>
    </location>
</feature>
<feature type="modified residue" description="Phosphoserine" evidence="1">
    <location>
        <position position="241"/>
    </location>
</feature>
<feature type="modified residue" description="N6-acetyllysine" evidence="1">
    <location>
        <position position="323"/>
    </location>
</feature>
<protein>
    <recommendedName>
        <fullName>Serine--tRNA ligase, cytoplasmic</fullName>
        <ecNumber evidence="1">6.1.1.11</ecNumber>
    </recommendedName>
    <alternativeName>
        <fullName>Seryl-tRNA synthetase</fullName>
        <shortName>SerRS</shortName>
    </alternativeName>
    <alternativeName>
        <fullName>Seryl-tRNA(Ser/Sec) synthetase</fullName>
    </alternativeName>
</protein>
<gene>
    <name type="primary">SARS1</name>
    <name type="synonym">SARS</name>
    <name type="synonym">SERS</name>
</gene>
<sequence>MVLDLDLFRVDKGGDPALIRESQEKRFKDPGLVDQLVKADSEWRRCRFRADNLNKLKNLCSKTIGEKMKKKEPVGNDESIPEDVLNLDDLTADTLTNLKVSQIKKVRLLVDEAILKCDAERIKLEAERFESLREIGNLLHPSVPISDDEDADNKVERIWGDCTVRKKYSHVDLVVMVDGFEGEKGAVVAGSRGYFLKGVLVFLEQALIQFALRTLASRGYTPIYTPFFMRKEVMQEVAQLSQFDEELYKVIGKGSEKSDDNSYEEKYLIATSEQPIAALHRDEWLRPEDLPIKYAGLSTCFRQEVGSHGRDTRGIFRVHQFEKIEQFVYSSPHDNKSWEMFEEMIATAEEFYQSLGIPYHIVNIVSGSLNHAASKKLDLEAWFPGSGAFRELVSCSNCTDYQARRLRIRYGQTKKMMDKVEFVHMLNATMCATTRTICAILENYQTEKGILVPEKLKEFMPPGLQELIPFVKAAPIDQEPSKKQKKQHEGSKKKGAARDVALESQLQNMEVTDA</sequence>
<comment type="function">
    <text evidence="1">Catalyzes the attachment of serine to tRNA(Ser) in a two-step reaction: serine is first activated by ATP to form Ser-AMP and then transferred to the acceptor end of tRNA(Ser). Is probably also able to aminoacylate tRNA(Sec) with serine, to form the misacylated tRNA L-seryl-tRNA(Sec), which will be further converted into selenocysteinyl-tRNA(Sec). In the nucleus, binds to the VEGFA core promoter and prevents MYC binding and transcriptional activation by MYC. Recruits SIRT2 to the VEGFA promoter, promoting deacetylation of histone H4 at 'Lys-16' (H4K16). Thereby, inhibits the production of VEGFA and sprouting angiogenesis mediated by VEGFA.</text>
</comment>
<comment type="catalytic activity">
    <reaction evidence="1">
        <text>tRNA(Ser) + L-serine + ATP = L-seryl-tRNA(Ser) + AMP + diphosphate + H(+)</text>
        <dbReference type="Rhea" id="RHEA:12292"/>
        <dbReference type="Rhea" id="RHEA-COMP:9669"/>
        <dbReference type="Rhea" id="RHEA-COMP:9703"/>
        <dbReference type="ChEBI" id="CHEBI:15378"/>
        <dbReference type="ChEBI" id="CHEBI:30616"/>
        <dbReference type="ChEBI" id="CHEBI:33019"/>
        <dbReference type="ChEBI" id="CHEBI:33384"/>
        <dbReference type="ChEBI" id="CHEBI:78442"/>
        <dbReference type="ChEBI" id="CHEBI:78533"/>
        <dbReference type="ChEBI" id="CHEBI:456215"/>
        <dbReference type="EC" id="6.1.1.11"/>
    </reaction>
</comment>
<comment type="catalytic activity">
    <reaction evidence="1">
        <text>tRNA(Sec) + L-serine + ATP = L-seryl-tRNA(Sec) + AMP + diphosphate + H(+)</text>
        <dbReference type="Rhea" id="RHEA:42580"/>
        <dbReference type="Rhea" id="RHEA-COMP:9742"/>
        <dbReference type="Rhea" id="RHEA-COMP:10128"/>
        <dbReference type="ChEBI" id="CHEBI:15378"/>
        <dbReference type="ChEBI" id="CHEBI:30616"/>
        <dbReference type="ChEBI" id="CHEBI:33019"/>
        <dbReference type="ChEBI" id="CHEBI:33384"/>
        <dbReference type="ChEBI" id="CHEBI:78442"/>
        <dbReference type="ChEBI" id="CHEBI:78533"/>
        <dbReference type="ChEBI" id="CHEBI:456215"/>
        <dbReference type="EC" id="6.1.1.11"/>
    </reaction>
</comment>
<comment type="pathway">
    <text>Aminoacyl-tRNA biosynthesis; selenocysteinyl-tRNA(Sec) biosynthesis; L-seryl-tRNA(Sec) from L-serine and tRNA(Sec): step 1/1.</text>
</comment>
<comment type="subunit">
    <text evidence="1">Homodimer. The tRNA molecule may bind across the dimer. Interacts with SIRT2. Interacts with METTL6; interaction is required for the tRNA N(3)-methylcytidine methyltransferase activity of METTL6.</text>
</comment>
<comment type="subcellular location">
    <subcellularLocation>
        <location evidence="1">Cytoplasm</location>
    </subcellularLocation>
    <subcellularLocation>
        <location evidence="1">Nucleus</location>
    </subcellularLocation>
    <text evidence="1">Predominantly cytoplasmic, but a minor proportion is also found in the nucleus.</text>
</comment>
<comment type="domain">
    <text evidence="1">Consists of two distinct domains, a catalytic core and a N-terminal extension that is involved in tRNA binding.</text>
</comment>
<comment type="similarity">
    <text evidence="3">Belongs to the class-II aminoacyl-tRNA synthetase family. Type-1 seryl-tRNA synthetase subfamily.</text>
</comment>
<accession>Q9GMB8</accession>
<keyword id="KW-0007">Acetylation</keyword>
<keyword id="KW-0030">Aminoacyl-tRNA synthetase</keyword>
<keyword id="KW-0067">ATP-binding</keyword>
<keyword id="KW-0963">Cytoplasm</keyword>
<keyword id="KW-0238">DNA-binding</keyword>
<keyword id="KW-0436">Ligase</keyword>
<keyword id="KW-0547">Nucleotide-binding</keyword>
<keyword id="KW-0539">Nucleus</keyword>
<keyword id="KW-0597">Phosphoprotein</keyword>
<keyword id="KW-0648">Protein biosynthesis</keyword>
<keyword id="KW-1185">Reference proteome</keyword>
<organism>
    <name type="scientific">Bos taurus</name>
    <name type="common">Bovine</name>
    <dbReference type="NCBI Taxonomy" id="9913"/>
    <lineage>
        <taxon>Eukaryota</taxon>
        <taxon>Metazoa</taxon>
        <taxon>Chordata</taxon>
        <taxon>Craniata</taxon>
        <taxon>Vertebrata</taxon>
        <taxon>Euteleostomi</taxon>
        <taxon>Mammalia</taxon>
        <taxon>Eutheria</taxon>
        <taxon>Laurasiatheria</taxon>
        <taxon>Artiodactyla</taxon>
        <taxon>Ruminantia</taxon>
        <taxon>Pecora</taxon>
        <taxon>Bovidae</taxon>
        <taxon>Bovinae</taxon>
        <taxon>Bos</taxon>
    </lineage>
</organism>
<name>SYSC_BOVIN</name>